<feature type="chain" id="PRO_1000020866" description="Protease HtpX">
    <location>
        <begin position="1"/>
        <end position="293"/>
    </location>
</feature>
<feature type="transmembrane region" description="Helical" evidence="1">
    <location>
        <begin position="4"/>
        <end position="24"/>
    </location>
</feature>
<feature type="transmembrane region" description="Helical" evidence="1">
    <location>
        <begin position="34"/>
        <end position="54"/>
    </location>
</feature>
<feature type="transmembrane region" description="Helical" evidence="1">
    <location>
        <begin position="158"/>
        <end position="178"/>
    </location>
</feature>
<feature type="transmembrane region" description="Helical" evidence="1">
    <location>
        <begin position="193"/>
        <end position="213"/>
    </location>
</feature>
<feature type="active site" evidence="1">
    <location>
        <position position="140"/>
    </location>
</feature>
<feature type="binding site" evidence="1">
    <location>
        <position position="139"/>
    </location>
    <ligand>
        <name>Zn(2+)</name>
        <dbReference type="ChEBI" id="CHEBI:29105"/>
        <note>catalytic</note>
    </ligand>
</feature>
<feature type="binding site" evidence="1">
    <location>
        <position position="143"/>
    </location>
    <ligand>
        <name>Zn(2+)</name>
        <dbReference type="ChEBI" id="CHEBI:29105"/>
        <note>catalytic</note>
    </ligand>
</feature>
<feature type="binding site" evidence="1">
    <location>
        <position position="222"/>
    </location>
    <ligand>
        <name>Zn(2+)</name>
        <dbReference type="ChEBI" id="CHEBI:29105"/>
        <note>catalytic</note>
    </ligand>
</feature>
<sequence>MMRIALFLITNLAVMLVFGLVLSLTGIQSSSVQGLMIMAGLFGFGGAFVSLLMSKWMALRSVGGEVIEQPRNETERWLVETVRSQSQQAGIAMPQVAIYHAPDINAFATGARRDASLVAVSTGLLQNMSRDEAEAVIAHEISHIANGDMVTMTLVQGIVNTFVIFISRLIAQVVSGFLSGNRDEGESSNGNPMVYFAVATVLELVFGILASIITMWFSRYREFHADAGSAKLVGREKMIAALQRLKTSYEPQEEGSMMAFCINGKSKSFSELFMSHPPLDKRIEALRSGEYLK</sequence>
<proteinExistence type="inferred from homology"/>
<dbReference type="EC" id="3.4.24.-" evidence="1"/>
<dbReference type="EMBL" id="BX950851">
    <property type="protein sequence ID" value="CAG75330.1"/>
    <property type="molecule type" value="Genomic_DNA"/>
</dbReference>
<dbReference type="RefSeq" id="WP_011093979.1">
    <property type="nucleotide sequence ID" value="NC_004547.2"/>
</dbReference>
<dbReference type="SMR" id="Q6D4G3"/>
<dbReference type="STRING" id="218491.ECA2427"/>
<dbReference type="MEROPS" id="M48.002"/>
<dbReference type="GeneID" id="57208857"/>
<dbReference type="KEGG" id="eca:ECA2427"/>
<dbReference type="PATRIC" id="fig|218491.5.peg.2458"/>
<dbReference type="eggNOG" id="COG0501">
    <property type="taxonomic scope" value="Bacteria"/>
</dbReference>
<dbReference type="HOGENOM" id="CLU_042266_1_0_6"/>
<dbReference type="OrthoDB" id="15218at2"/>
<dbReference type="Proteomes" id="UP000007966">
    <property type="component" value="Chromosome"/>
</dbReference>
<dbReference type="GO" id="GO:0005886">
    <property type="term" value="C:plasma membrane"/>
    <property type="evidence" value="ECO:0007669"/>
    <property type="project" value="UniProtKB-SubCell"/>
</dbReference>
<dbReference type="GO" id="GO:0004222">
    <property type="term" value="F:metalloendopeptidase activity"/>
    <property type="evidence" value="ECO:0007669"/>
    <property type="project" value="UniProtKB-UniRule"/>
</dbReference>
<dbReference type="GO" id="GO:0008270">
    <property type="term" value="F:zinc ion binding"/>
    <property type="evidence" value="ECO:0007669"/>
    <property type="project" value="UniProtKB-UniRule"/>
</dbReference>
<dbReference type="GO" id="GO:0006508">
    <property type="term" value="P:proteolysis"/>
    <property type="evidence" value="ECO:0007669"/>
    <property type="project" value="UniProtKB-KW"/>
</dbReference>
<dbReference type="CDD" id="cd07335">
    <property type="entry name" value="M48B_HtpX_like"/>
    <property type="match status" value="1"/>
</dbReference>
<dbReference type="FunFam" id="3.30.2010.10:FF:000001">
    <property type="entry name" value="Protease HtpX"/>
    <property type="match status" value="1"/>
</dbReference>
<dbReference type="Gene3D" id="3.30.2010.10">
    <property type="entry name" value="Metalloproteases ('zincins'), catalytic domain"/>
    <property type="match status" value="1"/>
</dbReference>
<dbReference type="HAMAP" id="MF_00188">
    <property type="entry name" value="Pept_M48_protease_HtpX"/>
    <property type="match status" value="1"/>
</dbReference>
<dbReference type="InterPro" id="IPR050083">
    <property type="entry name" value="HtpX_protease"/>
</dbReference>
<dbReference type="InterPro" id="IPR022919">
    <property type="entry name" value="Pept_M48_protease_HtpX"/>
</dbReference>
<dbReference type="InterPro" id="IPR001915">
    <property type="entry name" value="Peptidase_M48"/>
</dbReference>
<dbReference type="NCBIfam" id="NF003965">
    <property type="entry name" value="PRK05457.1"/>
    <property type="match status" value="1"/>
</dbReference>
<dbReference type="PANTHER" id="PTHR43221">
    <property type="entry name" value="PROTEASE HTPX"/>
    <property type="match status" value="1"/>
</dbReference>
<dbReference type="PANTHER" id="PTHR43221:SF1">
    <property type="entry name" value="PROTEASE HTPX"/>
    <property type="match status" value="1"/>
</dbReference>
<dbReference type="Pfam" id="PF01435">
    <property type="entry name" value="Peptidase_M48"/>
    <property type="match status" value="1"/>
</dbReference>
<evidence type="ECO:0000255" key="1">
    <source>
        <dbReference type="HAMAP-Rule" id="MF_00188"/>
    </source>
</evidence>
<comment type="cofactor">
    <cofactor evidence="1">
        <name>Zn(2+)</name>
        <dbReference type="ChEBI" id="CHEBI:29105"/>
    </cofactor>
    <text evidence="1">Binds 1 zinc ion per subunit.</text>
</comment>
<comment type="subcellular location">
    <subcellularLocation>
        <location evidence="1">Cell inner membrane</location>
        <topology evidence="1">Multi-pass membrane protein</topology>
    </subcellularLocation>
</comment>
<comment type="similarity">
    <text evidence="1">Belongs to the peptidase M48B family.</text>
</comment>
<protein>
    <recommendedName>
        <fullName evidence="1">Protease HtpX</fullName>
        <ecNumber evidence="1">3.4.24.-</ecNumber>
    </recommendedName>
    <alternativeName>
        <fullName evidence="1">Heat shock protein HtpX</fullName>
    </alternativeName>
</protein>
<keyword id="KW-0997">Cell inner membrane</keyword>
<keyword id="KW-1003">Cell membrane</keyword>
<keyword id="KW-0378">Hydrolase</keyword>
<keyword id="KW-0472">Membrane</keyword>
<keyword id="KW-0479">Metal-binding</keyword>
<keyword id="KW-0482">Metalloprotease</keyword>
<keyword id="KW-0645">Protease</keyword>
<keyword id="KW-1185">Reference proteome</keyword>
<keyword id="KW-0346">Stress response</keyword>
<keyword id="KW-0812">Transmembrane</keyword>
<keyword id="KW-1133">Transmembrane helix</keyword>
<keyword id="KW-0862">Zinc</keyword>
<organism>
    <name type="scientific">Pectobacterium atrosepticum (strain SCRI 1043 / ATCC BAA-672)</name>
    <name type="common">Erwinia carotovora subsp. atroseptica</name>
    <dbReference type="NCBI Taxonomy" id="218491"/>
    <lineage>
        <taxon>Bacteria</taxon>
        <taxon>Pseudomonadati</taxon>
        <taxon>Pseudomonadota</taxon>
        <taxon>Gammaproteobacteria</taxon>
        <taxon>Enterobacterales</taxon>
        <taxon>Pectobacteriaceae</taxon>
        <taxon>Pectobacterium</taxon>
    </lineage>
</organism>
<gene>
    <name evidence="1" type="primary">htpX</name>
    <name type="ordered locus">ECA2427</name>
</gene>
<accession>Q6D4G3</accession>
<name>HTPX_PECAS</name>
<reference key="1">
    <citation type="journal article" date="2004" name="Proc. Natl. Acad. Sci. U.S.A.">
        <title>Genome sequence of the enterobacterial phytopathogen Erwinia carotovora subsp. atroseptica and characterization of virulence factors.</title>
        <authorList>
            <person name="Bell K.S."/>
            <person name="Sebaihia M."/>
            <person name="Pritchard L."/>
            <person name="Holden M.T.G."/>
            <person name="Hyman L.J."/>
            <person name="Holeva M.C."/>
            <person name="Thomson N.R."/>
            <person name="Bentley S.D."/>
            <person name="Churcher L.J.C."/>
            <person name="Mungall K."/>
            <person name="Atkin R."/>
            <person name="Bason N."/>
            <person name="Brooks K."/>
            <person name="Chillingworth T."/>
            <person name="Clark K."/>
            <person name="Doggett J."/>
            <person name="Fraser A."/>
            <person name="Hance Z."/>
            <person name="Hauser H."/>
            <person name="Jagels K."/>
            <person name="Moule S."/>
            <person name="Norbertczak H."/>
            <person name="Ormond D."/>
            <person name="Price C."/>
            <person name="Quail M.A."/>
            <person name="Sanders M."/>
            <person name="Walker D."/>
            <person name="Whitehead S."/>
            <person name="Salmond G.P.C."/>
            <person name="Birch P.R.J."/>
            <person name="Parkhill J."/>
            <person name="Toth I.K."/>
        </authorList>
    </citation>
    <scope>NUCLEOTIDE SEQUENCE [LARGE SCALE GENOMIC DNA]</scope>
    <source>
        <strain>SCRI 1043 / ATCC BAA-672</strain>
    </source>
</reference>